<proteinExistence type="evidence at protein level"/>
<organism>
    <name type="scientific">Homo sapiens</name>
    <name type="common">Human</name>
    <dbReference type="NCBI Taxonomy" id="9606"/>
    <lineage>
        <taxon>Eukaryota</taxon>
        <taxon>Metazoa</taxon>
        <taxon>Chordata</taxon>
        <taxon>Craniata</taxon>
        <taxon>Vertebrata</taxon>
        <taxon>Euteleostomi</taxon>
        <taxon>Mammalia</taxon>
        <taxon>Eutheria</taxon>
        <taxon>Euarchontoglires</taxon>
        <taxon>Primates</taxon>
        <taxon>Haplorrhini</taxon>
        <taxon>Catarrhini</taxon>
        <taxon>Hominidae</taxon>
        <taxon>Homo</taxon>
    </lineage>
</organism>
<gene>
    <name evidence="20 21" type="primary">TRIP4</name>
    <name evidence="16" type="synonym">RQT4</name>
</gene>
<sequence>MAVAGAVSGEPLVHWCTQQLRKTFGLDVSEEIIQYVLSIESAEEIREYVTDLLQGNEGKKGQFIEELITKWQKNDQELISDPLQQCFKKDEILDGQKSGDHLKRGRKKGRNRQEVPAFTEPDTTAEVKTPFDLAKAQENSNSVKKKTKFVNLYTREGQDRLAVLLPGRHPCDCLGQKHKLINNCLICGRIVCEQEGSGPCLFCGTLVCTHEEQDILQRDSNKSQKLLKKLMSGVENSGKVDISTKDLLPHQELRIKSGLEKAIKHKDKLLEFDRTSIRRTQVIDDESDYFASDSNQWLSKLERETLQKREEELRELRHASRLSKKVTIDFAGRKILEEENSLAEYHSRLDETIQAIANGTLNQPLTKLDRSSEEPLGVLVNPNMYQSPPQWVDHTGAASQKKAFRSSGFGLEFNSFQHQLRIQDQEFQEGFDGGWCLSVHQPWASLLVRGIKRVEGRSWYTPHRGRLWIAATAKKPSPQEVSELQATYRLLRGKDVEFPNDYPSGCLLGCVDLIDCLSQKQFKEQFPDISQESDSPFVFICKNPQEMVVKFPIKGNPKIWKLDSKIHQGAKKGLMKQNKAV</sequence>
<accession>Q15650</accession>
<accession>B2RAS0</accession>
<accession>Q96ED7</accession>
<accession>Q9UKH0</accession>
<comment type="function">
    <text evidence="1 4 5 8 9 12 13 14">Transcription coactivator which associates with nuclear receptors, transcriptional coactivators including EP300, CREBBP and NCOA1, and basal transcription factors like TBP and TFIIA to facilitate nuclear receptors-mediated transcription (PubMed:10454579, PubMed:25219498). May thereby play an important role in establishing distinct coactivator complexes under different cellular conditions (PubMed:10454579, PubMed:25219498). Plays a role in thyroid hormone receptor and estrogen receptor transactivation (PubMed:10454579, PubMed:25219498). Also involved in androgen receptor transactivation (By similarity). Plays a pivotal role in the transactivation of NF-kappa-B, SRF and AP1 (PubMed:12077347). Acts as a mediator of transrepression between nuclear receptor and either AP1 or NF-kappa-B (PubMed:12077347). May play a role in the development of neuromuscular junction (PubMed:26924529). May play a role in late myogenic differentiation (By similarity). Also functions as part of the RQC trigger (RQT) complex that activates the ribosome quality control (RQC) pathway, a pathway that degrades nascent peptide chains during problematic translation (PubMed:32099016, PubMed:32579943, PubMed:36302773).</text>
</comment>
<comment type="subunit">
    <text evidence="4 5 6 7 8 9 11 12 13 14">Interacts with the thyroid hormone receptor/TR (via the ligand-binding domain); this interaction requires the presence of thyroid hormone (PubMed:10454579). Interacts with the androgen receptor/AR; in an androgen, testosterone and dihydrotestosterone-dependent manner (PubMed:12390891). Interacts with ESR1 (estrogen ligand-bound); competes with UFSP2 (PubMed:10454579, PubMed:25219498). Interacts with UFSP2; competes with ligand-bound ESR1 (PubMed:25219498). Interacts with DDRGK1 and UFL1; the interaction with DDRGK1 is direct (PubMed:25219498). Interacts with NCOA1 (PubMed:25219498). Interacts with EP300 (PubMed:25219498). Part of the ASC-1 complex, that contains TRIP4, ASCC1, ASCC2 and ASCC3 (PubMed:12077347). Identified in the RQT (ribosome quality control trigger) complex, that contains ASCC2, ASCC3 and TRIP4 (PubMed:32099016, PubMed:32579943, PubMed:36302773). Interacts with NEK6 (PubMed:20873783). Interacts with CSRP1 (PubMed:26924529). Interacts with ZCCHC4 (PubMed:31799605).</text>
</comment>
<comment type="subcellular location">
    <subcellularLocation>
        <location evidence="4 5 7 9">Nucleus</location>
    </subcellularLocation>
    <subcellularLocation>
        <location evidence="4 7">Cytoplasm</location>
        <location evidence="4 7">Cytosol</location>
    </subcellularLocation>
    <subcellularLocation>
        <location evidence="7">Cytoplasm</location>
        <location evidence="7">Cytoskeleton</location>
        <location evidence="7">Microtubule organizing center</location>
        <location evidence="7">Centrosome</location>
    </subcellularLocation>
    <text evidence="4 7">Cytoplasmic under conditions of serum deprivation (PubMed:10454579). Colocalizes with NEK6 in the centrosome (PubMed:20873783).</text>
</comment>
<comment type="domain">
    <text evidence="4 6 8">The C4-type zinc finger mediates a competitive interaction with UFSP2 and ligand-bound nuclear receptors. It also mediates interaction with the transcriptional coactivators and the basal transcription machinery.</text>
</comment>
<comment type="PTM">
    <text evidence="7">Phosphorylated by NEK6.</text>
</comment>
<comment type="PTM">
    <text evidence="8">Polyufmylated by the UFM1-conjugating system composed of the enzymes UBA5, UFC1 and UFL1. Deufmylated by the protease UFSP2. Ufmylation of TRIP4 is promoted by ligand-bound nuclear receptors that compete with UFSP2 for interaction with TRIP4. Nuclear receptors-induced ufmylation promotes the recruitment of additional transcriptional coactivators like EP300 and NCOA1 and therefore the assembly of a coactivator complex facilitating nuclear receptor-mediated transcription.</text>
</comment>
<comment type="disease" evidence="9">
    <disease id="DI-04681">
        <name>Spinal muscular atrophy with congenital bone fractures 1</name>
        <acronym>SMABF1</acronym>
        <description>An autosomal recessive neuromuscular disorder characterized by prenatal-onset spinal muscular atrophy, multiple congenital contractures consistent with arthrogryposis multiplex congenita, respiratory distress, and congenital bone fractures.</description>
        <dbReference type="MIM" id="616866"/>
    </disease>
    <text>The disease is caused by variants affecting the gene represented in this entry.</text>
</comment>
<comment type="disease" evidence="10">
    <disease id="DI-04800">
        <name>Muscular dystrophy, congenital, Davignon-Chauveau type</name>
        <acronym>MDCDC</acronym>
        <description>An autosomal recessive, severe congenital muscular dystrophy characterized by neonatal onset of muscle weakness predominantly involving axial muscles, life-threatening respiratory failure, skin abnormalities and joint hyperlaxity without contractures. Muscle biopsies show multi-minicores, caps and dystrophic lesions.</description>
        <dbReference type="MIM" id="617066"/>
    </disease>
    <text>The disease is caused by variants affecting the gene represented in this entry.</text>
</comment>
<comment type="sequence caution" evidence="18">
    <conflict type="frameshift">
        <sequence resource="EMBL-CDS" id="AAC41738"/>
    </conflict>
</comment>
<name>TRIP4_HUMAN</name>
<dbReference type="EMBL" id="AF168418">
    <property type="protein sequence ID" value="AAF01278.1"/>
    <property type="molecule type" value="mRNA"/>
</dbReference>
<dbReference type="EMBL" id="AK314319">
    <property type="protein sequence ID" value="BAG36967.1"/>
    <property type="molecule type" value="mRNA"/>
</dbReference>
<dbReference type="EMBL" id="CH471082">
    <property type="protein sequence ID" value="EAW77685.1"/>
    <property type="molecule type" value="Genomic_DNA"/>
</dbReference>
<dbReference type="EMBL" id="BC012448">
    <property type="protein sequence ID" value="AAH12448.1"/>
    <property type="molecule type" value="mRNA"/>
</dbReference>
<dbReference type="EMBL" id="L40371">
    <property type="protein sequence ID" value="AAC41738.1"/>
    <property type="status" value="ALT_FRAME"/>
    <property type="molecule type" value="mRNA"/>
</dbReference>
<dbReference type="CCDS" id="CCDS10194.1"/>
<dbReference type="RefSeq" id="NP_001308853.1">
    <property type="nucleotide sequence ID" value="NM_001321924.1"/>
</dbReference>
<dbReference type="RefSeq" id="NP_057297.2">
    <property type="nucleotide sequence ID" value="NM_016213.4"/>
</dbReference>
<dbReference type="PDB" id="2E5O">
    <property type="method" value="NMR"/>
    <property type="chains" value="A=435-581"/>
</dbReference>
<dbReference type="PDB" id="8ALZ">
    <property type="method" value="EM"/>
    <property type="resolution" value="3.40 A"/>
    <property type="chains" value="A=1-581"/>
</dbReference>
<dbReference type="PDB" id="8YEW">
    <property type="method" value="X-ray"/>
    <property type="resolution" value="1.90 A"/>
    <property type="chains" value="A=435-581"/>
</dbReference>
<dbReference type="PDB" id="8YEY">
    <property type="method" value="X-ray"/>
    <property type="resolution" value="2.00 A"/>
    <property type="chains" value="A/C=435-581"/>
</dbReference>
<dbReference type="PDB" id="8YFI">
    <property type="method" value="X-ray"/>
    <property type="resolution" value="2.02 A"/>
    <property type="chains" value="A=435-581"/>
</dbReference>
<dbReference type="PDB" id="8YFJ">
    <property type="method" value="X-ray"/>
    <property type="resolution" value="1.84 A"/>
    <property type="chains" value="A=435-581"/>
</dbReference>
<dbReference type="PDB" id="8YXW">
    <property type="method" value="X-ray"/>
    <property type="resolution" value="2.10 A"/>
    <property type="chains" value="A/C=435-575"/>
</dbReference>
<dbReference type="PDB" id="8YXX">
    <property type="method" value="X-ray"/>
    <property type="resolution" value="2.65 A"/>
    <property type="chains" value="A/C=435-575"/>
</dbReference>
<dbReference type="PDBsum" id="2E5O"/>
<dbReference type="PDBsum" id="8ALZ"/>
<dbReference type="PDBsum" id="8YEW"/>
<dbReference type="PDBsum" id="8YEY"/>
<dbReference type="PDBsum" id="8YFI"/>
<dbReference type="PDBsum" id="8YFJ"/>
<dbReference type="PDBsum" id="8YXW"/>
<dbReference type="PDBsum" id="8YXX"/>
<dbReference type="EMDB" id="EMD-15521"/>
<dbReference type="SMR" id="Q15650"/>
<dbReference type="BioGRID" id="114735">
    <property type="interactions" value="211"/>
</dbReference>
<dbReference type="ComplexPortal" id="CPX-6642">
    <property type="entry name" value="RQT ribosome-associated quality control trigger complex"/>
</dbReference>
<dbReference type="CORUM" id="Q15650"/>
<dbReference type="FunCoup" id="Q15650">
    <property type="interactions" value="2065"/>
</dbReference>
<dbReference type="IntAct" id="Q15650">
    <property type="interactions" value="43"/>
</dbReference>
<dbReference type="STRING" id="9606.ENSP00000261884"/>
<dbReference type="iPTMnet" id="Q15650"/>
<dbReference type="PhosphoSitePlus" id="Q15650"/>
<dbReference type="SwissPalm" id="Q15650"/>
<dbReference type="BioMuta" id="TRIP4"/>
<dbReference type="DMDM" id="116242828"/>
<dbReference type="jPOST" id="Q15650"/>
<dbReference type="MassIVE" id="Q15650"/>
<dbReference type="PaxDb" id="9606-ENSP00000261884"/>
<dbReference type="PeptideAtlas" id="Q15650"/>
<dbReference type="ProteomicsDB" id="60688"/>
<dbReference type="Pumba" id="Q15650"/>
<dbReference type="Antibodypedia" id="1761">
    <property type="antibodies" value="279 antibodies from 33 providers"/>
</dbReference>
<dbReference type="DNASU" id="9325"/>
<dbReference type="Ensembl" id="ENST00000261884.8">
    <property type="protein sequence ID" value="ENSP00000261884.3"/>
    <property type="gene ID" value="ENSG00000103671.10"/>
</dbReference>
<dbReference type="GeneID" id="9325"/>
<dbReference type="KEGG" id="hsa:9325"/>
<dbReference type="MANE-Select" id="ENST00000261884.8">
    <property type="protein sequence ID" value="ENSP00000261884.3"/>
    <property type="RefSeq nucleotide sequence ID" value="NM_016213.5"/>
    <property type="RefSeq protein sequence ID" value="NP_057297.2"/>
</dbReference>
<dbReference type="UCSC" id="uc002anm.3">
    <property type="organism name" value="human"/>
</dbReference>
<dbReference type="AGR" id="HGNC:12310"/>
<dbReference type="CTD" id="9325"/>
<dbReference type="DisGeNET" id="9325"/>
<dbReference type="GeneCards" id="TRIP4"/>
<dbReference type="HGNC" id="HGNC:12310">
    <property type="gene designation" value="TRIP4"/>
</dbReference>
<dbReference type="HPA" id="ENSG00000103671">
    <property type="expression patterns" value="Low tissue specificity"/>
</dbReference>
<dbReference type="MalaCards" id="TRIP4"/>
<dbReference type="MIM" id="604501">
    <property type="type" value="gene"/>
</dbReference>
<dbReference type="MIM" id="616866">
    <property type="type" value="phenotype"/>
</dbReference>
<dbReference type="MIM" id="617066">
    <property type="type" value="phenotype"/>
</dbReference>
<dbReference type="neXtProt" id="NX_Q15650"/>
<dbReference type="OpenTargets" id="ENSG00000103671"/>
<dbReference type="Orphanet" id="486815">
    <property type="disease" value="Congenital muscular dystrophy-respiratory failure-skin abnormalities-joint hyperlaxity syndrome"/>
</dbReference>
<dbReference type="Orphanet" id="486811">
    <property type="disease" value="Prenatal-onset spinal muscular atrophy with congenital bone fractures"/>
</dbReference>
<dbReference type="PharmGKB" id="PA36988"/>
<dbReference type="VEuPathDB" id="HostDB:ENSG00000103671"/>
<dbReference type="eggNOG" id="KOG2845">
    <property type="taxonomic scope" value="Eukaryota"/>
</dbReference>
<dbReference type="GeneTree" id="ENSGT00390000005300"/>
<dbReference type="HOGENOM" id="CLU_025737_1_0_1"/>
<dbReference type="InParanoid" id="Q15650"/>
<dbReference type="OMA" id="EFNSYRH"/>
<dbReference type="OrthoDB" id="338816at2759"/>
<dbReference type="PAN-GO" id="Q15650">
    <property type="GO annotations" value="3 GO annotations based on evolutionary models"/>
</dbReference>
<dbReference type="PhylomeDB" id="Q15650"/>
<dbReference type="TreeFam" id="TF314842"/>
<dbReference type="PathwayCommons" id="Q15650"/>
<dbReference type="SignaLink" id="Q15650"/>
<dbReference type="BioGRID-ORCS" id="9325">
    <property type="hits" value="16 hits in 1159 CRISPR screens"/>
</dbReference>
<dbReference type="ChiTaRS" id="TRIP4">
    <property type="organism name" value="human"/>
</dbReference>
<dbReference type="EvolutionaryTrace" id="Q15650"/>
<dbReference type="GeneWiki" id="TRIP4"/>
<dbReference type="GenomeRNAi" id="9325"/>
<dbReference type="Pharos" id="Q15650">
    <property type="development level" value="Tbio"/>
</dbReference>
<dbReference type="PRO" id="PR:Q15650"/>
<dbReference type="Proteomes" id="UP000005640">
    <property type="component" value="Chromosome 15"/>
</dbReference>
<dbReference type="RNAct" id="Q15650">
    <property type="molecule type" value="protein"/>
</dbReference>
<dbReference type="Bgee" id="ENSG00000103671">
    <property type="expression patterns" value="Expressed in sural nerve and 193 other cell types or tissues"/>
</dbReference>
<dbReference type="ExpressionAtlas" id="Q15650">
    <property type="expression patterns" value="baseline and differential"/>
</dbReference>
<dbReference type="GO" id="GO:0005813">
    <property type="term" value="C:centrosome"/>
    <property type="evidence" value="ECO:0007669"/>
    <property type="project" value="UniProtKB-SubCell"/>
</dbReference>
<dbReference type="GO" id="GO:0005737">
    <property type="term" value="C:cytoplasm"/>
    <property type="evidence" value="ECO:0000314"/>
    <property type="project" value="UniProtKB"/>
</dbReference>
<dbReference type="GO" id="GO:0005829">
    <property type="term" value="C:cytosol"/>
    <property type="evidence" value="ECO:0007669"/>
    <property type="project" value="UniProtKB-SubCell"/>
</dbReference>
<dbReference type="GO" id="GO:0031594">
    <property type="term" value="C:neuromuscular junction"/>
    <property type="evidence" value="ECO:0000315"/>
    <property type="project" value="UniProtKB"/>
</dbReference>
<dbReference type="GO" id="GO:0016604">
    <property type="term" value="C:nuclear body"/>
    <property type="evidence" value="ECO:0000314"/>
    <property type="project" value="HPA"/>
</dbReference>
<dbReference type="GO" id="GO:0005654">
    <property type="term" value="C:nucleoplasm"/>
    <property type="evidence" value="ECO:0000314"/>
    <property type="project" value="HPA"/>
</dbReference>
<dbReference type="GO" id="GO:0005634">
    <property type="term" value="C:nucleus"/>
    <property type="evidence" value="ECO:0000314"/>
    <property type="project" value="UniProtKB"/>
</dbReference>
<dbReference type="GO" id="GO:0032991">
    <property type="term" value="C:protein-containing complex"/>
    <property type="evidence" value="ECO:0000314"/>
    <property type="project" value="UniProtKB"/>
</dbReference>
<dbReference type="GO" id="GO:0180022">
    <property type="term" value="C:RQC-trigger complex"/>
    <property type="evidence" value="ECO:0000314"/>
    <property type="project" value="UniProtKB"/>
</dbReference>
<dbReference type="GO" id="GO:0035035">
    <property type="term" value="F:histone acetyltransferase binding"/>
    <property type="evidence" value="ECO:0000353"/>
    <property type="project" value="UniProtKB"/>
</dbReference>
<dbReference type="GO" id="GO:0030331">
    <property type="term" value="F:nuclear estrogen receptor binding"/>
    <property type="evidence" value="ECO:0000353"/>
    <property type="project" value="UniProtKB"/>
</dbReference>
<dbReference type="GO" id="GO:0016922">
    <property type="term" value="F:nuclear receptor binding"/>
    <property type="evidence" value="ECO:0000314"/>
    <property type="project" value="UniProtKB"/>
</dbReference>
<dbReference type="GO" id="GO:0002020">
    <property type="term" value="F:protease binding"/>
    <property type="evidence" value="ECO:0000353"/>
    <property type="project" value="UniProtKB"/>
</dbReference>
<dbReference type="GO" id="GO:0019901">
    <property type="term" value="F:protein kinase binding"/>
    <property type="evidence" value="ECO:0000353"/>
    <property type="project" value="UniProtKB"/>
</dbReference>
<dbReference type="GO" id="GO:0003713">
    <property type="term" value="F:transcription coactivator activity"/>
    <property type="evidence" value="ECO:0000315"/>
    <property type="project" value="UniProtKB"/>
</dbReference>
<dbReference type="GO" id="GO:0044389">
    <property type="term" value="F:ubiquitin-like protein ligase binding"/>
    <property type="evidence" value="ECO:0000353"/>
    <property type="project" value="UniProtKB"/>
</dbReference>
<dbReference type="GO" id="GO:0008270">
    <property type="term" value="F:zinc ion binding"/>
    <property type="evidence" value="ECO:0007669"/>
    <property type="project" value="UniProtKB-KW"/>
</dbReference>
<dbReference type="GO" id="GO:0030520">
    <property type="term" value="P:estrogen receptor signaling pathway"/>
    <property type="evidence" value="ECO:0000314"/>
    <property type="project" value="UniProtKB"/>
</dbReference>
<dbReference type="GO" id="GO:0045893">
    <property type="term" value="P:positive regulation of DNA-templated transcription"/>
    <property type="evidence" value="ECO:0000315"/>
    <property type="project" value="UniProtKB"/>
</dbReference>
<dbReference type="GO" id="GO:0006355">
    <property type="term" value="P:regulation of DNA-templated transcription"/>
    <property type="evidence" value="ECO:0000314"/>
    <property type="project" value="UniProtKB"/>
</dbReference>
<dbReference type="GO" id="GO:0045661">
    <property type="term" value="P:regulation of myoblast differentiation"/>
    <property type="evidence" value="ECO:0000250"/>
    <property type="project" value="UniProtKB"/>
</dbReference>
<dbReference type="GO" id="GO:0072344">
    <property type="term" value="P:rescue of stalled ribosome"/>
    <property type="evidence" value="ECO:0000314"/>
    <property type="project" value="UniProtKB"/>
</dbReference>
<dbReference type="GO" id="GO:0032790">
    <property type="term" value="P:ribosome disassembly"/>
    <property type="evidence" value="ECO:0000314"/>
    <property type="project" value="UniProtKB"/>
</dbReference>
<dbReference type="GO" id="GO:1990116">
    <property type="term" value="P:ribosome-associated ubiquitin-dependent protein catabolic process"/>
    <property type="evidence" value="ECO:0000315"/>
    <property type="project" value="UniProtKB"/>
</dbReference>
<dbReference type="CDD" id="cd06554">
    <property type="entry name" value="ASCH_ASC-1_like"/>
    <property type="match status" value="1"/>
</dbReference>
<dbReference type="FunFam" id="2.30.130.30:FF:000004">
    <property type="entry name" value="Activating signal cointegrator 1"/>
    <property type="match status" value="1"/>
</dbReference>
<dbReference type="Gene3D" id="2.30.130.30">
    <property type="entry name" value="Hypothetical protein"/>
    <property type="match status" value="1"/>
</dbReference>
<dbReference type="InterPro" id="IPR007374">
    <property type="entry name" value="ASCH_domain"/>
</dbReference>
<dbReference type="InterPro" id="IPR015947">
    <property type="entry name" value="PUA-like_sf"/>
</dbReference>
<dbReference type="InterPro" id="IPR056994">
    <property type="entry name" value="TRI4_N"/>
</dbReference>
<dbReference type="InterPro" id="IPR039128">
    <property type="entry name" value="TRIP4-like"/>
</dbReference>
<dbReference type="InterPro" id="IPR009349">
    <property type="entry name" value="TRIP4/RQT4_C2HC5_Znf"/>
</dbReference>
<dbReference type="InterPro" id="IPR056993">
    <property type="entry name" value="TRIP4_3rd_dom"/>
</dbReference>
<dbReference type="PANTHER" id="PTHR12963:SF0">
    <property type="entry name" value="EXPRESSED PROTEIN"/>
    <property type="match status" value="1"/>
</dbReference>
<dbReference type="PANTHER" id="PTHR12963">
    <property type="entry name" value="THYROID RECEPTOR INTERACTING PROTEIN RELATED"/>
    <property type="match status" value="1"/>
</dbReference>
<dbReference type="Pfam" id="PF04266">
    <property type="entry name" value="ASCH"/>
    <property type="match status" value="1"/>
</dbReference>
<dbReference type="Pfam" id="PF23135">
    <property type="entry name" value="TRI4_N"/>
    <property type="match status" value="1"/>
</dbReference>
<dbReference type="Pfam" id="PF23134">
    <property type="entry name" value="TRIP4_3rd"/>
    <property type="match status" value="1"/>
</dbReference>
<dbReference type="Pfam" id="PF06221">
    <property type="entry name" value="zf-C2HC5"/>
    <property type="match status" value="1"/>
</dbReference>
<dbReference type="SMART" id="SM01022">
    <property type="entry name" value="ASCH"/>
    <property type="match status" value="1"/>
</dbReference>
<dbReference type="SUPFAM" id="SSF88697">
    <property type="entry name" value="PUA domain-like"/>
    <property type="match status" value="1"/>
</dbReference>
<evidence type="ECO:0000250" key="1">
    <source>
        <dbReference type="UniProtKB" id="Q9QXN3"/>
    </source>
</evidence>
<evidence type="ECO:0000255" key="2"/>
<evidence type="ECO:0000256" key="3">
    <source>
        <dbReference type="SAM" id="MobiDB-lite"/>
    </source>
</evidence>
<evidence type="ECO:0000269" key="4">
    <source>
    </source>
</evidence>
<evidence type="ECO:0000269" key="5">
    <source>
    </source>
</evidence>
<evidence type="ECO:0000269" key="6">
    <source>
    </source>
</evidence>
<evidence type="ECO:0000269" key="7">
    <source>
    </source>
</evidence>
<evidence type="ECO:0000269" key="8">
    <source>
    </source>
</evidence>
<evidence type="ECO:0000269" key="9">
    <source>
    </source>
</evidence>
<evidence type="ECO:0000269" key="10">
    <source>
    </source>
</evidence>
<evidence type="ECO:0000269" key="11">
    <source>
    </source>
</evidence>
<evidence type="ECO:0000269" key="12">
    <source>
    </source>
</evidence>
<evidence type="ECO:0000269" key="13">
    <source>
    </source>
</evidence>
<evidence type="ECO:0000269" key="14">
    <source>
    </source>
</evidence>
<evidence type="ECO:0000303" key="15">
    <source>
    </source>
</evidence>
<evidence type="ECO:0000303" key="16">
    <source>
    </source>
</evidence>
<evidence type="ECO:0000303" key="17">
    <source>
    </source>
</evidence>
<evidence type="ECO:0000305" key="18"/>
<evidence type="ECO:0000305" key="19">
    <source>
    </source>
</evidence>
<evidence type="ECO:0000312" key="20">
    <source>
        <dbReference type="EMBL" id="AAC41738.1"/>
    </source>
</evidence>
<evidence type="ECO:0000312" key="21">
    <source>
        <dbReference type="HGNC" id="HGNC:12310"/>
    </source>
</evidence>
<evidence type="ECO:0007744" key="22">
    <source>
    </source>
</evidence>
<evidence type="ECO:0007744" key="23">
    <source>
    </source>
</evidence>
<evidence type="ECO:0007829" key="24">
    <source>
        <dbReference type="PDB" id="8ALZ"/>
    </source>
</evidence>
<evidence type="ECO:0007829" key="25">
    <source>
        <dbReference type="PDB" id="8YEW"/>
    </source>
</evidence>
<evidence type="ECO:0007829" key="26">
    <source>
        <dbReference type="PDB" id="8YFJ"/>
    </source>
</evidence>
<keyword id="KW-0002">3D-structure</keyword>
<keyword id="KW-0007">Acetylation</keyword>
<keyword id="KW-0912">Congenital muscular dystrophy</keyword>
<keyword id="KW-0963">Cytoplasm</keyword>
<keyword id="KW-0206">Cytoskeleton</keyword>
<keyword id="KW-1017">Isopeptide bond</keyword>
<keyword id="KW-0479">Metal-binding</keyword>
<keyword id="KW-0523">Neurodegeneration</keyword>
<keyword id="KW-0539">Nucleus</keyword>
<keyword id="KW-0597">Phosphoprotein</keyword>
<keyword id="KW-1267">Proteomics identification</keyword>
<keyword id="KW-1185">Reference proteome</keyword>
<keyword id="KW-0804">Transcription</keyword>
<keyword id="KW-0805">Transcription regulation</keyword>
<keyword id="KW-0832">Ubl conjugation</keyword>
<keyword id="KW-0862">Zinc</keyword>
<keyword id="KW-0863">Zinc-finger</keyword>
<protein>
    <recommendedName>
        <fullName evidence="15">Activating signal cointegrator 1</fullName>
        <shortName evidence="15">ASC-1</shortName>
    </recommendedName>
    <alternativeName>
        <fullName evidence="17">Thyroid receptor-interacting protein 4</fullName>
        <shortName evidence="17">TR-interacting protein 4</shortName>
        <shortName evidence="17">TRIP-4</shortName>
    </alternativeName>
</protein>
<reference key="1">
    <citation type="journal article" date="1999" name="Mol. Cell. Biol.">
        <title>Activating signal cointegrator 1, a novel transcription coactivator of nuclear receptors, and its cytosolic localization under conditions of serum deprivation.</title>
        <authorList>
            <person name="Kim H.J."/>
            <person name="Yi J.Y."/>
            <person name="Sung H.S."/>
            <person name="Moore D.D."/>
            <person name="Jhun B.H."/>
            <person name="Lee Y.C."/>
            <person name="Lee J.W."/>
        </authorList>
    </citation>
    <scope>NUCLEOTIDE SEQUENCE [MRNA]</scope>
    <scope>FUNCTION</scope>
    <scope>SUBCELLULAR LOCATION</scope>
    <scope>SUBUNIT</scope>
    <scope>DOMAIN</scope>
</reference>
<reference key="2">
    <citation type="journal article" date="2004" name="Nat. Genet.">
        <title>Complete sequencing and characterization of 21,243 full-length human cDNAs.</title>
        <authorList>
            <person name="Ota T."/>
            <person name="Suzuki Y."/>
            <person name="Nishikawa T."/>
            <person name="Otsuki T."/>
            <person name="Sugiyama T."/>
            <person name="Irie R."/>
            <person name="Wakamatsu A."/>
            <person name="Hayashi K."/>
            <person name="Sato H."/>
            <person name="Nagai K."/>
            <person name="Kimura K."/>
            <person name="Makita H."/>
            <person name="Sekine M."/>
            <person name="Obayashi M."/>
            <person name="Nishi T."/>
            <person name="Shibahara T."/>
            <person name="Tanaka T."/>
            <person name="Ishii S."/>
            <person name="Yamamoto J."/>
            <person name="Saito K."/>
            <person name="Kawai Y."/>
            <person name="Isono Y."/>
            <person name="Nakamura Y."/>
            <person name="Nagahari K."/>
            <person name="Murakami K."/>
            <person name="Yasuda T."/>
            <person name="Iwayanagi T."/>
            <person name="Wagatsuma M."/>
            <person name="Shiratori A."/>
            <person name="Sudo H."/>
            <person name="Hosoiri T."/>
            <person name="Kaku Y."/>
            <person name="Kodaira H."/>
            <person name="Kondo H."/>
            <person name="Sugawara M."/>
            <person name="Takahashi M."/>
            <person name="Kanda K."/>
            <person name="Yokoi T."/>
            <person name="Furuya T."/>
            <person name="Kikkawa E."/>
            <person name="Omura Y."/>
            <person name="Abe K."/>
            <person name="Kamihara K."/>
            <person name="Katsuta N."/>
            <person name="Sato K."/>
            <person name="Tanikawa M."/>
            <person name="Yamazaki M."/>
            <person name="Ninomiya K."/>
            <person name="Ishibashi T."/>
            <person name="Yamashita H."/>
            <person name="Murakawa K."/>
            <person name="Fujimori K."/>
            <person name="Tanai H."/>
            <person name="Kimata M."/>
            <person name="Watanabe M."/>
            <person name="Hiraoka S."/>
            <person name="Chiba Y."/>
            <person name="Ishida S."/>
            <person name="Ono Y."/>
            <person name="Takiguchi S."/>
            <person name="Watanabe S."/>
            <person name="Yosida M."/>
            <person name="Hotuta T."/>
            <person name="Kusano J."/>
            <person name="Kanehori K."/>
            <person name="Takahashi-Fujii A."/>
            <person name="Hara H."/>
            <person name="Tanase T.-O."/>
            <person name="Nomura Y."/>
            <person name="Togiya S."/>
            <person name="Komai F."/>
            <person name="Hara R."/>
            <person name="Takeuchi K."/>
            <person name="Arita M."/>
            <person name="Imose N."/>
            <person name="Musashino K."/>
            <person name="Yuuki H."/>
            <person name="Oshima A."/>
            <person name="Sasaki N."/>
            <person name="Aotsuka S."/>
            <person name="Yoshikawa Y."/>
            <person name="Matsunawa H."/>
            <person name="Ichihara T."/>
            <person name="Shiohata N."/>
            <person name="Sano S."/>
            <person name="Moriya S."/>
            <person name="Momiyama H."/>
            <person name="Satoh N."/>
            <person name="Takami S."/>
            <person name="Terashima Y."/>
            <person name="Suzuki O."/>
            <person name="Nakagawa S."/>
            <person name="Senoh A."/>
            <person name="Mizoguchi H."/>
            <person name="Goto Y."/>
            <person name="Shimizu F."/>
            <person name="Wakebe H."/>
            <person name="Hishigaki H."/>
            <person name="Watanabe T."/>
            <person name="Sugiyama A."/>
            <person name="Takemoto M."/>
            <person name="Kawakami B."/>
            <person name="Yamazaki M."/>
            <person name="Watanabe K."/>
            <person name="Kumagai A."/>
            <person name="Itakura S."/>
            <person name="Fukuzumi Y."/>
            <person name="Fujimori Y."/>
            <person name="Komiyama M."/>
            <person name="Tashiro H."/>
            <person name="Tanigami A."/>
            <person name="Fujiwara T."/>
            <person name="Ono T."/>
            <person name="Yamada K."/>
            <person name="Fujii Y."/>
            <person name="Ozaki K."/>
            <person name="Hirao M."/>
            <person name="Ohmori Y."/>
            <person name="Kawabata A."/>
            <person name="Hikiji T."/>
            <person name="Kobatake N."/>
            <person name="Inagaki H."/>
            <person name="Ikema Y."/>
            <person name="Okamoto S."/>
            <person name="Okitani R."/>
            <person name="Kawakami T."/>
            <person name="Noguchi S."/>
            <person name="Itoh T."/>
            <person name="Shigeta K."/>
            <person name="Senba T."/>
            <person name="Matsumura K."/>
            <person name="Nakajima Y."/>
            <person name="Mizuno T."/>
            <person name="Morinaga M."/>
            <person name="Sasaki M."/>
            <person name="Togashi T."/>
            <person name="Oyama M."/>
            <person name="Hata H."/>
            <person name="Watanabe M."/>
            <person name="Komatsu T."/>
            <person name="Mizushima-Sugano J."/>
            <person name="Satoh T."/>
            <person name="Shirai Y."/>
            <person name="Takahashi Y."/>
            <person name="Nakagawa K."/>
            <person name="Okumura K."/>
            <person name="Nagase T."/>
            <person name="Nomura N."/>
            <person name="Kikuchi H."/>
            <person name="Masuho Y."/>
            <person name="Yamashita R."/>
            <person name="Nakai K."/>
            <person name="Yada T."/>
            <person name="Nakamura Y."/>
            <person name="Ohara O."/>
            <person name="Isogai T."/>
            <person name="Sugano S."/>
        </authorList>
    </citation>
    <scope>NUCLEOTIDE SEQUENCE [LARGE SCALE MRNA]</scope>
</reference>
<reference key="3">
    <citation type="submission" date="2005-07" db="EMBL/GenBank/DDBJ databases">
        <authorList>
            <person name="Mural R.J."/>
            <person name="Istrail S."/>
            <person name="Sutton G.G."/>
            <person name="Florea L."/>
            <person name="Halpern A.L."/>
            <person name="Mobarry C.M."/>
            <person name="Lippert R."/>
            <person name="Walenz B."/>
            <person name="Shatkay H."/>
            <person name="Dew I."/>
            <person name="Miller J.R."/>
            <person name="Flanigan M.J."/>
            <person name="Edwards N.J."/>
            <person name="Bolanos R."/>
            <person name="Fasulo D."/>
            <person name="Halldorsson B.V."/>
            <person name="Hannenhalli S."/>
            <person name="Turner R."/>
            <person name="Yooseph S."/>
            <person name="Lu F."/>
            <person name="Nusskern D.R."/>
            <person name="Shue B.C."/>
            <person name="Zheng X.H."/>
            <person name="Zhong F."/>
            <person name="Delcher A.L."/>
            <person name="Huson D.H."/>
            <person name="Kravitz S.A."/>
            <person name="Mouchard L."/>
            <person name="Reinert K."/>
            <person name="Remington K.A."/>
            <person name="Clark A.G."/>
            <person name="Waterman M.S."/>
            <person name="Eichler E.E."/>
            <person name="Adams M.D."/>
            <person name="Hunkapiller M.W."/>
            <person name="Myers E.W."/>
            <person name="Venter J.C."/>
        </authorList>
    </citation>
    <scope>NUCLEOTIDE SEQUENCE [LARGE SCALE GENOMIC DNA]</scope>
</reference>
<reference key="4">
    <citation type="journal article" date="2004" name="Genome Res.">
        <title>The status, quality, and expansion of the NIH full-length cDNA project: the Mammalian Gene Collection (MGC).</title>
        <authorList>
            <consortium name="The MGC Project Team"/>
        </authorList>
    </citation>
    <scope>NUCLEOTIDE SEQUENCE [LARGE SCALE MRNA]</scope>
    <source>
        <tissue>Lung</tissue>
    </source>
</reference>
<reference key="5">
    <citation type="journal article" date="1995" name="Mol. Endocrinol.">
        <title>Two classes of proteins dependent on either the presence or absence of thyroid hormone for interaction with the thyroid hormone receptor.</title>
        <authorList>
            <person name="Lee J.W."/>
            <person name="Choi H.-S."/>
            <person name="Gyuris J."/>
            <person name="Brent R."/>
            <person name="Moore D.D."/>
        </authorList>
    </citation>
    <scope>NUCLEOTIDE SEQUENCE [MRNA] OF 125-491</scope>
</reference>
<reference key="6">
    <citation type="journal article" date="2002" name="Biol. Reprod.">
        <title>Activating signal cointegrator 1 is highly expressed in murine testicular Leydig cells and enhances the ligand-dependent transactivation of androgen receptor.</title>
        <authorList>
            <person name="Lee Y.S."/>
            <person name="Kim H.-J."/>
            <person name="Lee H.J."/>
            <person name="Lee J.W."/>
            <person name="Chun S.-Y."/>
            <person name="Ko S.-K."/>
            <person name="Lee K."/>
        </authorList>
    </citation>
    <scope>SUBUNIT</scope>
    <scope>DOMAIN</scope>
</reference>
<reference key="7">
    <citation type="journal article" date="2002" name="Mol. Cell. Biol.">
        <title>Novel transcription coactivator complex containing activating signal cointegrator 1.</title>
        <authorList>
            <person name="Jung D.-J."/>
            <person name="Sung H.-S."/>
            <person name="Goo Y.-W."/>
            <person name="Lee H.M."/>
            <person name="Park O.K."/>
            <person name="Jung S.-Y."/>
            <person name="Lim J."/>
            <person name="Kim H.-J."/>
            <person name="Lee S.-K."/>
            <person name="Kim T.S."/>
            <person name="Lee J.W."/>
            <person name="Lee Y.C."/>
        </authorList>
    </citation>
    <scope>FUNCTION</scope>
    <scope>IDENTIFICATION OF THE ASC-1 COMPLEX</scope>
    <scope>SUBCELLULAR LOCATION</scope>
</reference>
<reference key="8">
    <citation type="journal article" date="2005" name="Nat. Biotechnol.">
        <title>Immunoaffinity profiling of tyrosine phosphorylation in cancer cells.</title>
        <authorList>
            <person name="Rush J."/>
            <person name="Moritz A."/>
            <person name="Lee K.A."/>
            <person name="Guo A."/>
            <person name="Goss V.L."/>
            <person name="Spek E.J."/>
            <person name="Zhang H."/>
            <person name="Zha X.-M."/>
            <person name="Polakiewicz R.D."/>
            <person name="Comb M.J."/>
        </authorList>
    </citation>
    <scope>IDENTIFICATION BY MASS SPECTROMETRY [LARGE SCALE ANALYSIS]</scope>
</reference>
<reference key="9">
    <citation type="journal article" date="2008" name="Proc. Natl. Acad. Sci. U.S.A.">
        <title>A quantitative atlas of mitotic phosphorylation.</title>
        <authorList>
            <person name="Dephoure N."/>
            <person name="Zhou C."/>
            <person name="Villen J."/>
            <person name="Beausoleil S.A."/>
            <person name="Bakalarski C.E."/>
            <person name="Elledge S.J."/>
            <person name="Gygi S.P."/>
        </authorList>
    </citation>
    <scope>IDENTIFICATION BY MASS SPECTROMETRY [LARGE SCALE ANALYSIS]</scope>
    <source>
        <tissue>Cervix carcinoma</tissue>
    </source>
</reference>
<reference key="10">
    <citation type="journal article" date="2009" name="Anal. Chem.">
        <title>Lys-N and trypsin cover complementary parts of the phosphoproteome in a refined SCX-based approach.</title>
        <authorList>
            <person name="Gauci S."/>
            <person name="Helbig A.O."/>
            <person name="Slijper M."/>
            <person name="Krijgsveld J."/>
            <person name="Heck A.J."/>
            <person name="Mohammed S."/>
        </authorList>
    </citation>
    <scope>ACETYLATION [LARGE SCALE ANALYSIS] AT ALA-2</scope>
    <scope>CLEAVAGE OF INITIATOR METHIONINE [LARGE SCALE ANALYSIS]</scope>
    <scope>IDENTIFICATION BY MASS SPECTROMETRY [LARGE SCALE ANALYSIS]</scope>
</reference>
<reference key="11">
    <citation type="journal article" date="2010" name="J. Proteome Res.">
        <title>Characterization of hNek6 interactome reveals an important role for its short N-terminal domain and colocalization with proteins at the centrosome.</title>
        <authorList>
            <person name="Vaz Meirelles G."/>
            <person name="Ferreira Lanza D.C."/>
            <person name="da Silva J.C."/>
            <person name="Santana Bernachi J."/>
            <person name="Paes Leme A.F."/>
            <person name="Kobarg J."/>
        </authorList>
    </citation>
    <scope>SUBCELLULAR LOCATION</scope>
    <scope>INTERACTION WITH NEK6</scope>
    <scope>PHOSPHORYLATION BY NEK6</scope>
</reference>
<reference key="12">
    <citation type="journal article" date="2010" name="Sci. Signal.">
        <title>Quantitative phosphoproteomics reveals widespread full phosphorylation site occupancy during mitosis.</title>
        <authorList>
            <person name="Olsen J.V."/>
            <person name="Vermeulen M."/>
            <person name="Santamaria A."/>
            <person name="Kumar C."/>
            <person name="Miller M.L."/>
            <person name="Jensen L.J."/>
            <person name="Gnad F."/>
            <person name="Cox J."/>
            <person name="Jensen T.S."/>
            <person name="Nigg E.A."/>
            <person name="Brunak S."/>
            <person name="Mann M."/>
        </authorList>
    </citation>
    <scope>IDENTIFICATION BY MASS SPECTROMETRY [LARGE SCALE ANALYSIS]</scope>
    <source>
        <tissue>Cervix carcinoma</tissue>
    </source>
</reference>
<reference key="13">
    <citation type="journal article" date="2011" name="BMC Syst. Biol.">
        <title>Initial characterization of the human central proteome.</title>
        <authorList>
            <person name="Burkard T.R."/>
            <person name="Planyavsky M."/>
            <person name="Kaupe I."/>
            <person name="Breitwieser F.P."/>
            <person name="Buerckstuemmer T."/>
            <person name="Bennett K.L."/>
            <person name="Superti-Furga G."/>
            <person name="Colinge J."/>
        </authorList>
    </citation>
    <scope>IDENTIFICATION BY MASS SPECTROMETRY [LARGE SCALE ANALYSIS]</scope>
</reference>
<reference key="14">
    <citation type="journal article" date="2013" name="J. Proteome Res.">
        <title>Toward a comprehensive characterization of a human cancer cell phosphoproteome.</title>
        <authorList>
            <person name="Zhou H."/>
            <person name="Di Palma S."/>
            <person name="Preisinger C."/>
            <person name="Peng M."/>
            <person name="Polat A.N."/>
            <person name="Heck A.J."/>
            <person name="Mohammed S."/>
        </authorList>
    </citation>
    <scope>PHOSPHORYLATION [LARGE SCALE ANALYSIS] AT SER-276 AND SER-341</scope>
    <scope>IDENTIFICATION BY MASS SPECTROMETRY [LARGE SCALE ANALYSIS]</scope>
    <source>
        <tissue>Erythroleukemia</tissue>
    </source>
</reference>
<reference key="15">
    <citation type="journal article" date="2016" name="Am. J. Hum. Genet.">
        <title>Mutations in subunits of the activating signal cointegrator 1 complex are associated with prenatal spinal muscular atrophy and congenital bone fractures.</title>
        <authorList>
            <person name="Knierim E."/>
            <person name="Hirata H."/>
            <person name="Wolf N.I."/>
            <person name="Morales-Gonzalez S."/>
            <person name="Schottmann G."/>
            <person name="Tanaka Y."/>
            <person name="Rudnik-Schoeneborn S."/>
            <person name="Orgeur M."/>
            <person name="Zerres K."/>
            <person name="Vogt S."/>
            <person name="van Riesen A."/>
            <person name="Gill E."/>
            <person name="Seifert F."/>
            <person name="Zwirner A."/>
            <person name="Kirschner J."/>
            <person name="Goebel H.H."/>
            <person name="Huebner C."/>
            <person name="Stricker S."/>
            <person name="Meierhofer D."/>
            <person name="Stenzel W."/>
            <person name="Schuelke M."/>
        </authorList>
    </citation>
    <scope>FUNCTION</scope>
    <scope>INTERACTION WITH CSRP1</scope>
    <scope>SUBCELLULAR LOCATION</scope>
    <scope>INVOLVEMENT IN SMABF1</scope>
</reference>
<reference key="16">
    <citation type="journal article" date="2014" name="Mol. Cell">
        <title>Modification of ASC1 by UFM1 is crucial for ERalpha transactivation and breast cancer development.</title>
        <authorList>
            <person name="Yoo H.M."/>
            <person name="Kang S.H."/>
            <person name="Kim J.Y."/>
            <person name="Lee J.E."/>
            <person name="Seong M.W."/>
            <person name="Lee S.W."/>
            <person name="Ka S.H."/>
            <person name="Sou Y.S."/>
            <person name="Komatsu M."/>
            <person name="Tanaka K."/>
            <person name="Lee S.T."/>
            <person name="Noh D.Y."/>
            <person name="Baek S.H."/>
            <person name="Jeon Y.J."/>
            <person name="Chung C.H."/>
        </authorList>
    </citation>
    <scope>FUNCTION</scope>
    <scope>INTERACTION WITH DDRGK1; EP300; ESR1; NCOA1; UFL1 AND UFSP2</scope>
    <scope>SUBCELLULAR LOCATION</scope>
    <scope>REGION</scope>
    <scope>UFMYLATION AT LYS-324; LYS-325; LYS-334 AND LYS-367 BY UFL1</scope>
    <scope>DEUFMYLATION BY UFSP2</scope>
</reference>
<reference key="17">
    <citation type="journal article" date="2016" name="Hum. Mol. Genet.">
        <title>The transcription coactivator ASC-1 is a regulator of skeletal myogenesis, and its deficiency causes a novel form of congenital muscle disease.</title>
        <authorList>
            <person name="Davignon L."/>
            <person name="Chauveau C."/>
            <person name="Julien C."/>
            <person name="Dill C."/>
            <person name="Duband-Goulet I."/>
            <person name="Cabet E."/>
            <person name="Buendia B."/>
            <person name="Lilienbaum A."/>
            <person name="Rendu J."/>
            <person name="Minot M.C."/>
            <person name="Guichet A."/>
            <person name="Allamand V."/>
            <person name="Vadrot N."/>
            <person name="Faure J."/>
            <person name="Odent S."/>
            <person name="Lazaro L."/>
            <person name="Leroy J.P."/>
            <person name="Marcorelles P."/>
            <person name="Dubourg O."/>
            <person name="Ferreiro A."/>
        </authorList>
    </citation>
    <scope>INVOLVEMENT IN MDCDC</scope>
</reference>
<reference key="18">
    <citation type="journal article" date="2020" name="Nucleic Acids Res.">
        <title>The human methyltransferase ZCCHC4 catalyses N6-methyladenosine modification of 28S ribosomal RNA.</title>
        <authorList>
            <person name="Pinto R."/>
            <person name="Vaagboe C.B."/>
            <person name="Jakobsson M.E."/>
            <person name="Kim Y."/>
            <person name="Baltissen M.P."/>
            <person name="O'Donohue M.F."/>
            <person name="Guzman U.H."/>
            <person name="Malecki J.M."/>
            <person name="Wu J."/>
            <person name="Kirpekar F."/>
            <person name="Olsen J.V."/>
            <person name="Gleizes P.E."/>
            <person name="Vermeulen M."/>
            <person name="Leidel S.A."/>
            <person name="Slupphaug G."/>
            <person name="Falnes P.O."/>
        </authorList>
    </citation>
    <scope>INTERACTION WITH ZCCHC4</scope>
</reference>
<reference key="19">
    <citation type="journal article" date="2020" name="Mol. Cell">
        <title>The ASC-1 complex disassembles collided ribosomes.</title>
        <authorList>
            <person name="Juszkiewicz S."/>
            <person name="Speldewinde S.H."/>
            <person name="Wan L."/>
            <person name="Svejstrup J.Q."/>
            <person name="Hegde R.S."/>
        </authorList>
    </citation>
    <scope>FUNCTION</scope>
    <scope>IDENTIFICATION IN THE RQT COMPLEX</scope>
</reference>
<reference key="20">
    <citation type="journal article" date="2020" name="Sci. Rep.">
        <title>Identification of a novel trigger complex that facilitates ribosome-associated quality control in mammalian cells.</title>
        <authorList>
            <person name="Hashimoto S."/>
            <person name="Sugiyama T."/>
            <person name="Yamazaki R."/>
            <person name="Nobuta R."/>
            <person name="Inada T."/>
        </authorList>
    </citation>
    <scope>FUNCTION</scope>
    <scope>IDENTIFICATION IN THE RQT COMPLEX</scope>
</reference>
<reference key="21">
    <citation type="submission" date="2006-12" db="PDB data bank">
        <title>Solution structure of the TRIP_4C domain of target of activating signal cointegrator 1.</title>
        <authorList>
            <consortium name="RIKEN structural genomics initiative (RSGI)"/>
        </authorList>
    </citation>
    <scope>STRUCTURE BY NMR OF 435-581</scope>
</reference>
<reference key="22">
    <citation type="journal article" date="2022" name="Nat. Commun.">
        <title>A distinct mammalian disome collision interface harbors K63-linked polyubiquitination of uS10 to trigger hRQT-mediated subunit dissociation.</title>
        <authorList>
            <person name="Narita M."/>
            <person name="Denk T."/>
            <person name="Matsuo Y."/>
            <person name="Sugiyama T."/>
            <person name="Kikuguchi C."/>
            <person name="Ito S."/>
            <person name="Sato N."/>
            <person name="Suzuki T."/>
            <person name="Hashimoto S."/>
            <person name="Machova I."/>
            <person name="Tesina P."/>
            <person name="Beckmann R."/>
            <person name="Inada T."/>
        </authorList>
    </citation>
    <scope>FUNCTION</scope>
    <scope>IDENTIFICATION IN THE RQT COMPLEX</scope>
</reference>
<feature type="initiator methionine" description="Removed" evidence="22">
    <location>
        <position position="1"/>
    </location>
</feature>
<feature type="chain" id="PRO_0000065631" description="Activating signal cointegrator 1">
    <location>
        <begin position="2"/>
        <end position="581"/>
    </location>
</feature>
<feature type="domain" description="ASCH" evidence="2">
    <location>
        <begin position="437"/>
        <end position="531"/>
    </location>
</feature>
<feature type="zinc finger region" description="C4-type">
    <location>
        <begin position="171"/>
        <end position="187"/>
    </location>
</feature>
<feature type="region of interest" description="Disordered" evidence="3">
    <location>
        <begin position="97"/>
        <end position="118"/>
    </location>
</feature>
<feature type="region of interest" description="Mediates interaction with DDRGK1" evidence="8">
    <location>
        <begin position="200"/>
        <end position="300"/>
    </location>
</feature>
<feature type="region of interest" description="Mediates interaction with UFL1" evidence="8">
    <location>
        <begin position="300"/>
        <end position="400"/>
    </location>
</feature>
<feature type="modified residue" description="N-acetylalanine" evidence="22">
    <location>
        <position position="2"/>
    </location>
</feature>
<feature type="modified residue" description="Phosphoserine" evidence="23">
    <location>
        <position position="276"/>
    </location>
</feature>
<feature type="modified residue" description="Phosphotyrosine" evidence="1">
    <location>
        <position position="289"/>
    </location>
</feature>
<feature type="modified residue" description="Phosphoserine" evidence="23">
    <location>
        <position position="341"/>
    </location>
</feature>
<feature type="cross-link" description="Glycyl lysine isopeptide (Lys-Gly) (interchain with G-Cter in UFM1)" evidence="19">
    <location>
        <position position="324"/>
    </location>
</feature>
<feature type="cross-link" description="Glycyl lysine isopeptide (Lys-Gly) (interchain with G-Cter in UFM1)" evidence="19">
    <location>
        <position position="325"/>
    </location>
</feature>
<feature type="cross-link" description="Glycyl lysine isopeptide (Lys-Gly) (interchain with G-Cter in UFM1)" evidence="19">
    <location>
        <position position="334"/>
    </location>
</feature>
<feature type="cross-link" description="Glycyl lysine isopeptide (Lys-Gly) (interchain with G-Cter in UFM1)" evidence="19">
    <location>
        <position position="367"/>
    </location>
</feature>
<feature type="sequence conflict" description="In Ref. 1; AAF01278 and 5; AAC41738." evidence="18" ref="1 5">
    <original>G</original>
    <variation>R</variation>
    <location>
        <position position="157"/>
    </location>
</feature>
<feature type="sequence conflict" description="In Ref. 1; AAF01278." evidence="18" ref="1">
    <original>L</original>
    <variation>A</variation>
    <location>
        <position position="164"/>
    </location>
</feature>
<feature type="sequence conflict" description="In Ref. 5; AAC41738." evidence="18" ref="5">
    <original>K</original>
    <variation>N</variation>
    <location>
        <position position="475"/>
    </location>
</feature>
<feature type="strand" evidence="24">
    <location>
        <begin position="176"/>
        <end position="178"/>
    </location>
</feature>
<feature type="turn" evidence="24">
    <location>
        <begin position="185"/>
        <end position="187"/>
    </location>
</feature>
<feature type="strand" evidence="24">
    <location>
        <begin position="197"/>
        <end position="199"/>
    </location>
</feature>
<feature type="turn" evidence="24">
    <location>
        <begin position="201"/>
        <end position="203"/>
    </location>
</feature>
<feature type="helix" evidence="24">
    <location>
        <begin position="210"/>
        <end position="218"/>
    </location>
</feature>
<feature type="helix" evidence="24">
    <location>
        <begin position="396"/>
        <end position="404"/>
    </location>
</feature>
<feature type="helix" evidence="24">
    <location>
        <begin position="425"/>
        <end position="428"/>
    </location>
</feature>
<feature type="strand" evidence="26">
    <location>
        <begin position="435"/>
        <end position="439"/>
    </location>
</feature>
<feature type="helix" evidence="26">
    <location>
        <begin position="443"/>
        <end position="448"/>
    </location>
</feature>
<feature type="strand" evidence="26">
    <location>
        <begin position="454"/>
        <end position="459"/>
    </location>
</feature>
<feature type="strand" evidence="26">
    <location>
        <begin position="465"/>
        <end position="471"/>
    </location>
</feature>
<feature type="helix" evidence="26">
    <location>
        <begin position="478"/>
        <end position="492"/>
    </location>
</feature>
<feature type="strand" evidence="26">
    <location>
        <begin position="504"/>
        <end position="518"/>
    </location>
</feature>
<feature type="helix" evidence="26">
    <location>
        <begin position="519"/>
        <end position="525"/>
    </location>
</feature>
<feature type="turn" evidence="26">
    <location>
        <begin position="527"/>
        <end position="529"/>
    </location>
</feature>
<feature type="helix" evidence="26">
    <location>
        <begin position="530"/>
        <end position="532"/>
    </location>
</feature>
<feature type="strand" evidence="26">
    <location>
        <begin position="535"/>
        <end position="552"/>
    </location>
</feature>
<feature type="strand" evidence="26">
    <location>
        <begin position="557"/>
        <end position="561"/>
    </location>
</feature>
<feature type="helix" evidence="26">
    <location>
        <begin position="564"/>
        <end position="574"/>
    </location>
</feature>
<feature type="helix" evidence="25">
    <location>
        <begin position="576"/>
        <end position="578"/>
    </location>
</feature>